<keyword id="KW-0051">Antiviral defense</keyword>
<keyword id="KW-0202">Cytokine</keyword>
<keyword id="KW-1015">Disulfide bond</keyword>
<keyword id="KW-0325">Glycoprotein</keyword>
<keyword id="KW-1185">Reference proteome</keyword>
<keyword id="KW-0964">Secreted</keyword>
<keyword id="KW-0732">Signal</keyword>
<organism>
    <name type="scientific">Gallus gallus</name>
    <name type="common">Chicken</name>
    <dbReference type="NCBI Taxonomy" id="9031"/>
    <lineage>
        <taxon>Eukaryota</taxon>
        <taxon>Metazoa</taxon>
        <taxon>Chordata</taxon>
        <taxon>Craniata</taxon>
        <taxon>Vertebrata</taxon>
        <taxon>Euteleostomi</taxon>
        <taxon>Archelosauria</taxon>
        <taxon>Archosauria</taxon>
        <taxon>Dinosauria</taxon>
        <taxon>Saurischia</taxon>
        <taxon>Theropoda</taxon>
        <taxon>Coelurosauria</taxon>
        <taxon>Aves</taxon>
        <taxon>Neognathae</taxon>
        <taxon>Galloanserae</taxon>
        <taxon>Galliformes</taxon>
        <taxon>Phasianidae</taxon>
        <taxon>Phasianinae</taxon>
        <taxon>Gallus</taxon>
    </lineage>
</organism>
<evidence type="ECO:0000250" key="1"/>
<evidence type="ECO:0000255" key="2"/>
<evidence type="ECO:0000305" key="3"/>
<sequence>MAVPASPQHPRGYGILLLTLLLKALATTASACNHLRPQDATFSHDSLQLLRDMAPTLPQLCPQHNASCSFNDTILDTSNTRQADKTTHDILQHLFKILSSPSTPAHWNDSQRQSLLNRIHRYTQHLEQCLDSSDTRSRTRWPRNLHLTIKKHFSCLHTFLQDNDYSACAWEHVRLQARAWFLHIHNLTGNTRT</sequence>
<comment type="function">
    <text>Has antiviral activities.</text>
</comment>
<comment type="subcellular location">
    <subcellularLocation>
        <location evidence="3">Secreted</location>
    </subcellularLocation>
</comment>
<comment type="developmental stage">
    <text>Appears first at 3 hours post-infection, increases to give the strongest signal at about 9 hours and gradually wanes to almost nothing at 24 hours.</text>
</comment>
<comment type="similarity">
    <text evidence="3">Belongs to the alpha/beta interferon family.</text>
</comment>
<proteinExistence type="evidence at transcript level"/>
<feature type="signal peptide" evidence="2">
    <location>
        <begin position="1"/>
        <end position="31"/>
    </location>
</feature>
<feature type="chain" id="PRO_0000016428" description="Interferon type A1/A2">
    <location>
        <begin position="32"/>
        <end position="193"/>
    </location>
</feature>
<feature type="glycosylation site" description="N-linked (GlcNAc...) asparagine" evidence="2">
    <location>
        <position position="65"/>
    </location>
</feature>
<feature type="glycosylation site" description="N-linked (GlcNAc...) asparagine" evidence="2">
    <location>
        <position position="71"/>
    </location>
</feature>
<feature type="glycosylation site" description="N-linked (GlcNAc...) asparagine" evidence="2">
    <location>
        <position position="108"/>
    </location>
</feature>
<feature type="glycosylation site" description="N-linked (GlcNAc...) asparagine" evidence="2">
    <location>
        <position position="186"/>
    </location>
</feature>
<feature type="disulfide bond" evidence="1">
    <location>
        <begin position="32"/>
        <end position="129"/>
    </location>
</feature>
<feature type="disulfide bond" evidence="2">
    <location>
        <begin position="61"/>
        <end position="155"/>
    </location>
</feature>
<feature type="disulfide bond" evidence="1">
    <location>
        <begin position="68"/>
        <end position="168"/>
    </location>
</feature>
<feature type="sequence variant">
    <original>N</original>
    <variation>S</variation>
    <location>
        <position position="65"/>
    </location>
</feature>
<dbReference type="EMBL" id="U07868">
    <property type="protein sequence ID" value="AAA50213.1"/>
    <property type="molecule type" value="mRNA"/>
</dbReference>
<dbReference type="EMBL" id="X92477">
    <property type="protein sequence ID" value="CAA63215.1"/>
    <property type="molecule type" value="Genomic_DNA"/>
</dbReference>
<dbReference type="EMBL" id="X92476">
    <property type="protein sequence ID" value="CAA63214.1"/>
    <property type="molecule type" value="Genomic_DNA"/>
</dbReference>
<dbReference type="PIR" id="I50693">
    <property type="entry name" value="I50693"/>
</dbReference>
<dbReference type="RefSeq" id="NP_990758.1">
    <property type="nucleotide sequence ID" value="NM_205427.1"/>
</dbReference>
<dbReference type="RefSeq" id="XP_004937152.1">
    <property type="nucleotide sequence ID" value="XM_004937095.2"/>
</dbReference>
<dbReference type="RefSeq" id="XP_004937153.1">
    <property type="nucleotide sequence ID" value="XM_004937096.2"/>
</dbReference>
<dbReference type="RefSeq" id="XP_015132923.1">
    <property type="nucleotide sequence ID" value="XM_015277437.1"/>
</dbReference>
<dbReference type="RefSeq" id="XP_015132925.1">
    <property type="nucleotide sequence ID" value="XM_015277439.1"/>
</dbReference>
<dbReference type="SMR" id="P42165"/>
<dbReference type="FunCoup" id="P42165">
    <property type="interactions" value="90"/>
</dbReference>
<dbReference type="STRING" id="9031.ENSGALP00000069151"/>
<dbReference type="GlyCosmos" id="P42165">
    <property type="glycosylation" value="4 sites, No reported glycans"/>
</dbReference>
<dbReference type="GlyGen" id="P42165">
    <property type="glycosylation" value="5 sites"/>
</dbReference>
<dbReference type="PaxDb" id="9031-ENSGALP00000021594"/>
<dbReference type="GeneID" id="396398"/>
<dbReference type="KEGG" id="gga:100857744"/>
<dbReference type="KEGG" id="gga:100857947"/>
<dbReference type="KEGG" id="gga:100858177"/>
<dbReference type="KEGG" id="gga:100859032"/>
<dbReference type="KEGG" id="gga:396398"/>
<dbReference type="CTD" id="396398"/>
<dbReference type="VEuPathDB" id="HostDB:geneid_396398"/>
<dbReference type="eggNOG" id="ENOG502SQGR">
    <property type="taxonomic scope" value="Eukaryota"/>
</dbReference>
<dbReference type="HOGENOM" id="CLU_109427_1_0_1"/>
<dbReference type="InParanoid" id="P42165"/>
<dbReference type="OMA" id="INTYTHA"/>
<dbReference type="OrthoDB" id="9110568at2759"/>
<dbReference type="PhylomeDB" id="P42165"/>
<dbReference type="TreeFam" id="TF336177"/>
<dbReference type="Reactome" id="R-GGA-909733">
    <property type="pathway name" value="Interferon alpha/beta signaling"/>
</dbReference>
<dbReference type="Reactome" id="R-GGA-912694">
    <property type="pathway name" value="Regulation of IFNA/IFNB signaling"/>
</dbReference>
<dbReference type="PRO" id="PR:P42165"/>
<dbReference type="Proteomes" id="UP000000539">
    <property type="component" value="Chromosome Z"/>
</dbReference>
<dbReference type="Bgee" id="ENSGALG00000046996">
    <property type="expression patterns" value="Expressed in brain and 3 other cell types or tissues"/>
</dbReference>
<dbReference type="GO" id="GO:0005615">
    <property type="term" value="C:extracellular space"/>
    <property type="evidence" value="ECO:0000318"/>
    <property type="project" value="GO_Central"/>
</dbReference>
<dbReference type="GO" id="GO:0005125">
    <property type="term" value="F:cytokine activity"/>
    <property type="evidence" value="ECO:0000318"/>
    <property type="project" value="GO_Central"/>
</dbReference>
<dbReference type="GO" id="GO:0005132">
    <property type="term" value="F:type I interferon receptor binding"/>
    <property type="evidence" value="ECO:0000318"/>
    <property type="project" value="GO_Central"/>
</dbReference>
<dbReference type="GO" id="GO:0002250">
    <property type="term" value="P:adaptive immune response"/>
    <property type="evidence" value="ECO:0000318"/>
    <property type="project" value="GO_Central"/>
</dbReference>
<dbReference type="GO" id="GO:0002312">
    <property type="term" value="P:B cell activation involved in immune response"/>
    <property type="evidence" value="ECO:0000318"/>
    <property type="project" value="GO_Central"/>
</dbReference>
<dbReference type="GO" id="GO:0051607">
    <property type="term" value="P:defense response to virus"/>
    <property type="evidence" value="ECO:0007669"/>
    <property type="project" value="UniProtKB-KW"/>
</dbReference>
<dbReference type="GO" id="GO:0006959">
    <property type="term" value="P:humoral immune response"/>
    <property type="evidence" value="ECO:0000318"/>
    <property type="project" value="GO_Central"/>
</dbReference>
<dbReference type="GO" id="GO:0002323">
    <property type="term" value="P:natural killer cell activation involved in immune response"/>
    <property type="evidence" value="ECO:0000318"/>
    <property type="project" value="GO_Central"/>
</dbReference>
<dbReference type="GO" id="GO:0043330">
    <property type="term" value="P:response to exogenous dsRNA"/>
    <property type="evidence" value="ECO:0000318"/>
    <property type="project" value="GO_Central"/>
</dbReference>
<dbReference type="GO" id="GO:0002286">
    <property type="term" value="P:T cell activation involved in immune response"/>
    <property type="evidence" value="ECO:0000318"/>
    <property type="project" value="GO_Central"/>
</dbReference>
<dbReference type="GO" id="GO:0060337">
    <property type="term" value="P:type I interferon-mediated signaling pathway"/>
    <property type="evidence" value="ECO:0000318"/>
    <property type="project" value="GO_Central"/>
</dbReference>
<dbReference type="CDD" id="cd00095">
    <property type="entry name" value="IFab"/>
    <property type="match status" value="1"/>
</dbReference>
<dbReference type="FunFam" id="1.20.1250.10:FF:000046">
    <property type="entry name" value="Interferon alpha"/>
    <property type="match status" value="1"/>
</dbReference>
<dbReference type="Gene3D" id="1.20.1250.10">
    <property type="match status" value="1"/>
</dbReference>
<dbReference type="InterPro" id="IPR009079">
    <property type="entry name" value="4_helix_cytokine-like_core"/>
</dbReference>
<dbReference type="InterPro" id="IPR000471">
    <property type="entry name" value="Interferon_alpha/beta/delta"/>
</dbReference>
<dbReference type="PANTHER" id="PTHR11691:SF73">
    <property type="entry name" value="INTERFERON BETA"/>
    <property type="match status" value="1"/>
</dbReference>
<dbReference type="PANTHER" id="PTHR11691">
    <property type="entry name" value="TYPE I INTERFERON"/>
    <property type="match status" value="1"/>
</dbReference>
<dbReference type="Pfam" id="PF00143">
    <property type="entry name" value="Interferon"/>
    <property type="match status" value="1"/>
</dbReference>
<dbReference type="PRINTS" id="PR00266">
    <property type="entry name" value="INTERFERONAB"/>
</dbReference>
<dbReference type="SMART" id="SM00076">
    <property type="entry name" value="IFabd"/>
    <property type="match status" value="1"/>
</dbReference>
<dbReference type="SUPFAM" id="SSF47266">
    <property type="entry name" value="4-helical cytokines"/>
    <property type="match status" value="1"/>
</dbReference>
<dbReference type="PROSITE" id="PS00252">
    <property type="entry name" value="INTERFERON_A_B_D"/>
    <property type="match status" value="1"/>
</dbReference>
<gene>
    <name type="primary">IFNA1</name>
</gene>
<gene>
    <name type="primary">IFNA2</name>
</gene>
<reference key="1">
    <citation type="journal article" date="1994" name="J. Interferon Res.">
        <title>Chicken interferon gene: cloning, expression, and analysis.</title>
        <authorList>
            <person name="Sekellick M.J."/>
            <person name="Ferrandino A.F."/>
            <person name="Hopkins D.A."/>
            <person name="Marcus P.I."/>
        </authorList>
    </citation>
    <scope>NUCLEOTIDE SEQUENCE [MRNA]</scope>
</reference>
<reference key="2">
    <citation type="journal article" date="1996" name="J. Biol. Chem.">
        <title>A family of genes coding for two serologically distinct chicken interferons.</title>
        <authorList>
            <person name="Sick C."/>
            <person name="Schultz U."/>
            <person name="Staeheli P."/>
        </authorList>
    </citation>
    <scope>NUCLEOTIDE SEQUENCE [GENOMIC DNA]</scope>
    <source>
        <strain>White leghorn</strain>
        <tissue>Spleen</tissue>
    </source>
</reference>
<accession>P42165</accession>
<name>IFNA1_CHICK</name>
<protein>
    <recommendedName>
        <fullName>Interferon type A1/A2</fullName>
    </recommendedName>
</protein>